<evidence type="ECO:0000255" key="1">
    <source>
        <dbReference type="PROSITE-ProRule" id="PRU00108"/>
    </source>
</evidence>
<evidence type="ECO:0000256" key="2">
    <source>
        <dbReference type="SAM" id="MobiDB-lite"/>
    </source>
</evidence>
<evidence type="ECO:0000269" key="3">
    <source>
    </source>
</evidence>
<evidence type="ECO:0000303" key="4">
    <source>
    </source>
</evidence>
<evidence type="ECO:0000305" key="5"/>
<protein>
    <recommendedName>
        <fullName>Homeobox protein Hox-D12</fullName>
    </recommendedName>
    <alternativeName>
        <fullName>Homeobox protein Hox-4H</fullName>
    </alternativeName>
</protein>
<sequence length="270" mass="29031">MCERSLYRAGYVGSLLNLQSPDSFYFSNLRPNGGQLAALPPISYPRGALPWAATPASCAPAQPAGATAFGGFSQPYLAGSGPLGLQPPTAKDGPEEQAKFYAPEAAAGPEERGRTRPSFAPESSLAPAVAALKAAKYDYAGVGRATPGSTTLLQGAPCAPGFKDDTKGPLNLNMTVQAAGVASCLRPSLPDGLPWGAAPGRARKKRKPYTKQQIAELENEFLVNEFINRQKRKELSNRLNLSDQQVKIWFQNRRMKKKRVVLREQALALY</sequence>
<proteinExistence type="evidence at protein level"/>
<dbReference type="EMBL" id="AF154915">
    <property type="protein sequence ID" value="AAF79044.1"/>
    <property type="molecule type" value="Genomic_DNA"/>
</dbReference>
<dbReference type="EMBL" id="AC009336">
    <property type="status" value="NOT_ANNOTATED_CDS"/>
    <property type="molecule type" value="Genomic_DNA"/>
</dbReference>
<dbReference type="EMBL" id="CH471058">
    <property type="protein sequence ID" value="EAX11094.1"/>
    <property type="molecule type" value="Genomic_DNA"/>
</dbReference>
<dbReference type="EMBL" id="BC121103">
    <property type="protein sequence ID" value="AAI21104.1"/>
    <property type="molecule type" value="mRNA"/>
</dbReference>
<dbReference type="EMBL" id="BC121104">
    <property type="protein sequence ID" value="AAI21105.1"/>
    <property type="molecule type" value="mRNA"/>
</dbReference>
<dbReference type="CCDS" id="CCDS46456.1">
    <molecule id="P35452-1"/>
</dbReference>
<dbReference type="PIR" id="C39065">
    <property type="entry name" value="C39065"/>
</dbReference>
<dbReference type="RefSeq" id="NP_067016.3">
    <molecule id="P35452-1"/>
    <property type="nucleotide sequence ID" value="NM_021193.3"/>
</dbReference>
<dbReference type="SMR" id="P35452"/>
<dbReference type="BioGRID" id="109478">
    <property type="interactions" value="19"/>
</dbReference>
<dbReference type="FunCoup" id="P35452">
    <property type="interactions" value="414"/>
</dbReference>
<dbReference type="IntAct" id="P35452">
    <property type="interactions" value="11"/>
</dbReference>
<dbReference type="STRING" id="9606.ENSP00000385586"/>
<dbReference type="GlyGen" id="P35452">
    <property type="glycosylation" value="1 site"/>
</dbReference>
<dbReference type="iPTMnet" id="P35452"/>
<dbReference type="PhosphoSitePlus" id="P35452"/>
<dbReference type="BioMuta" id="HOXD12"/>
<dbReference type="DMDM" id="259016345"/>
<dbReference type="MassIVE" id="P35452"/>
<dbReference type="PaxDb" id="9606-ENSP00000385586"/>
<dbReference type="PeptideAtlas" id="P35452"/>
<dbReference type="ProteomicsDB" id="55064">
    <molecule id="P35452-1"/>
</dbReference>
<dbReference type="Antibodypedia" id="10810">
    <property type="antibodies" value="237 antibodies from 31 providers"/>
</dbReference>
<dbReference type="CPTC" id="P35452">
    <property type="antibodies" value="1 antibody"/>
</dbReference>
<dbReference type="DNASU" id="3238"/>
<dbReference type="Ensembl" id="ENST00000406506.4">
    <molecule id="P35452-1"/>
    <property type="protein sequence ID" value="ENSP00000385586.2"/>
    <property type="gene ID" value="ENSG00000170178.7"/>
</dbReference>
<dbReference type="GeneID" id="3238"/>
<dbReference type="KEGG" id="hsa:3238"/>
<dbReference type="MANE-Select" id="ENST00000406506.4">
    <property type="protein sequence ID" value="ENSP00000385586.2"/>
    <property type="RefSeq nucleotide sequence ID" value="NM_021193.4"/>
    <property type="RefSeq protein sequence ID" value="NP_067016.3"/>
</dbReference>
<dbReference type="UCSC" id="uc010zev.2">
    <molecule id="P35452-1"/>
    <property type="organism name" value="human"/>
</dbReference>
<dbReference type="AGR" id="HGNC:5135"/>
<dbReference type="CTD" id="3238"/>
<dbReference type="DisGeNET" id="3238"/>
<dbReference type="GeneCards" id="HOXD12"/>
<dbReference type="HGNC" id="HGNC:5135">
    <property type="gene designation" value="HOXD12"/>
</dbReference>
<dbReference type="HPA" id="ENSG00000170178">
    <property type="expression patterns" value="Tissue enhanced (intestine, seminal vesicle)"/>
</dbReference>
<dbReference type="MalaCards" id="HOXD12"/>
<dbReference type="MIM" id="142988">
    <property type="type" value="gene"/>
</dbReference>
<dbReference type="neXtProt" id="NX_P35452"/>
<dbReference type="OpenTargets" id="ENSG00000170178"/>
<dbReference type="PharmGKB" id="PA29409"/>
<dbReference type="VEuPathDB" id="HostDB:ENSG00000170178"/>
<dbReference type="eggNOG" id="KOG0487">
    <property type="taxonomic scope" value="Eukaryota"/>
</dbReference>
<dbReference type="GeneTree" id="ENSGT00940000159938"/>
<dbReference type="HOGENOM" id="CLU_087968_0_0_1"/>
<dbReference type="InParanoid" id="P35452"/>
<dbReference type="OMA" id="YYAHDTS"/>
<dbReference type="OrthoDB" id="6159439at2759"/>
<dbReference type="PAN-GO" id="P35452">
    <property type="GO annotations" value="1 GO annotation based on evolutionary models"/>
</dbReference>
<dbReference type="PhylomeDB" id="P35452"/>
<dbReference type="TreeFam" id="TF351604"/>
<dbReference type="PathwayCommons" id="P35452"/>
<dbReference type="SignaLink" id="P35452"/>
<dbReference type="SIGNOR" id="P35452"/>
<dbReference type="BioGRID-ORCS" id="3238">
    <property type="hits" value="13 hits in 1164 CRISPR screens"/>
</dbReference>
<dbReference type="GeneWiki" id="HOXD12"/>
<dbReference type="GenomeRNAi" id="3238"/>
<dbReference type="Pharos" id="P35452">
    <property type="development level" value="Tbio"/>
</dbReference>
<dbReference type="PRO" id="PR:P35452"/>
<dbReference type="Proteomes" id="UP000005640">
    <property type="component" value="Chromosome 2"/>
</dbReference>
<dbReference type="RNAct" id="P35452">
    <property type="molecule type" value="protein"/>
</dbReference>
<dbReference type="Bgee" id="ENSG00000170178">
    <property type="expression patterns" value="Expressed in vagina and 13 other cell types or tissues"/>
</dbReference>
<dbReference type="ExpressionAtlas" id="P35452">
    <property type="expression patterns" value="baseline and differential"/>
</dbReference>
<dbReference type="GO" id="GO:0000785">
    <property type="term" value="C:chromatin"/>
    <property type="evidence" value="ECO:0000247"/>
    <property type="project" value="NTNU_SB"/>
</dbReference>
<dbReference type="GO" id="GO:0005634">
    <property type="term" value="C:nucleus"/>
    <property type="evidence" value="ECO:0007669"/>
    <property type="project" value="UniProtKB-SubCell"/>
</dbReference>
<dbReference type="GO" id="GO:0005667">
    <property type="term" value="C:transcription regulator complex"/>
    <property type="evidence" value="ECO:0007669"/>
    <property type="project" value="Ensembl"/>
</dbReference>
<dbReference type="GO" id="GO:0000981">
    <property type="term" value="F:DNA-binding transcription factor activity, RNA polymerase II-specific"/>
    <property type="evidence" value="ECO:0000247"/>
    <property type="project" value="NTNU_SB"/>
</dbReference>
<dbReference type="GO" id="GO:1990837">
    <property type="term" value="F:sequence-specific double-stranded DNA binding"/>
    <property type="evidence" value="ECO:0000314"/>
    <property type="project" value="ARUK-UCL"/>
</dbReference>
<dbReference type="GO" id="GO:0042733">
    <property type="term" value="P:embryonic digit morphogenesis"/>
    <property type="evidence" value="ECO:0007669"/>
    <property type="project" value="Ensembl"/>
</dbReference>
<dbReference type="GO" id="GO:0007389">
    <property type="term" value="P:pattern specification process"/>
    <property type="evidence" value="ECO:0007669"/>
    <property type="project" value="Ensembl"/>
</dbReference>
<dbReference type="GO" id="GO:0001501">
    <property type="term" value="P:skeletal system development"/>
    <property type="evidence" value="ECO:0007669"/>
    <property type="project" value="Ensembl"/>
</dbReference>
<dbReference type="CDD" id="cd00086">
    <property type="entry name" value="homeodomain"/>
    <property type="match status" value="1"/>
</dbReference>
<dbReference type="FunFam" id="1.10.10.60:FF:000130">
    <property type="entry name" value="Homeobox protein Hox-D12"/>
    <property type="match status" value="1"/>
</dbReference>
<dbReference type="Gene3D" id="1.10.10.60">
    <property type="entry name" value="Homeodomain-like"/>
    <property type="match status" value="1"/>
</dbReference>
<dbReference type="InterPro" id="IPR001356">
    <property type="entry name" value="HD"/>
</dbReference>
<dbReference type="InterPro" id="IPR020479">
    <property type="entry name" value="HD_metazoa"/>
</dbReference>
<dbReference type="InterPro" id="IPR017970">
    <property type="entry name" value="Homeobox_CS"/>
</dbReference>
<dbReference type="InterPro" id="IPR009057">
    <property type="entry name" value="Homeodomain-like_sf"/>
</dbReference>
<dbReference type="PANTHER" id="PTHR46440:SF1">
    <property type="entry name" value="HOMEOBOX PROTEIN HOX-D12"/>
    <property type="match status" value="1"/>
</dbReference>
<dbReference type="PANTHER" id="PTHR46440">
    <property type="entry name" value="HOMEOBOX PROTEIN HOX-D12-RELATED"/>
    <property type="match status" value="1"/>
</dbReference>
<dbReference type="Pfam" id="PF00046">
    <property type="entry name" value="Homeodomain"/>
    <property type="match status" value="1"/>
</dbReference>
<dbReference type="PRINTS" id="PR00024">
    <property type="entry name" value="HOMEOBOX"/>
</dbReference>
<dbReference type="SMART" id="SM00389">
    <property type="entry name" value="HOX"/>
    <property type="match status" value="1"/>
</dbReference>
<dbReference type="SUPFAM" id="SSF46689">
    <property type="entry name" value="Homeodomain-like"/>
    <property type="match status" value="1"/>
</dbReference>
<dbReference type="PROSITE" id="PS00027">
    <property type="entry name" value="HOMEOBOX_1"/>
    <property type="match status" value="1"/>
</dbReference>
<dbReference type="PROSITE" id="PS50071">
    <property type="entry name" value="HOMEOBOX_2"/>
    <property type="match status" value="1"/>
</dbReference>
<keyword id="KW-0025">Alternative splicing</keyword>
<keyword id="KW-0217">Developmental protein</keyword>
<keyword id="KW-0238">DNA-binding</keyword>
<keyword id="KW-0371">Homeobox</keyword>
<keyword id="KW-0539">Nucleus</keyword>
<keyword id="KW-1267">Proteomics identification</keyword>
<keyword id="KW-1185">Reference proteome</keyword>
<keyword id="KW-0804">Transcription</keyword>
<keyword id="KW-0805">Transcription regulation</keyword>
<name>HXD12_HUMAN</name>
<organism>
    <name type="scientific">Homo sapiens</name>
    <name type="common">Human</name>
    <dbReference type="NCBI Taxonomy" id="9606"/>
    <lineage>
        <taxon>Eukaryota</taxon>
        <taxon>Metazoa</taxon>
        <taxon>Chordata</taxon>
        <taxon>Craniata</taxon>
        <taxon>Vertebrata</taxon>
        <taxon>Euteleostomi</taxon>
        <taxon>Mammalia</taxon>
        <taxon>Eutheria</taxon>
        <taxon>Euarchontoglires</taxon>
        <taxon>Primates</taxon>
        <taxon>Haplorrhini</taxon>
        <taxon>Catarrhini</taxon>
        <taxon>Hominidae</taxon>
        <taxon>Homo</taxon>
    </lineage>
</organism>
<reference key="1">
    <citation type="submission" date="1999-05" db="EMBL/GenBank/DDBJ databases">
        <title>The role of HOXD11 and HOXD12 for the mesomelic dysplasia Kantaptra type.</title>
        <authorList>
            <person name="Miwa N."/>
            <person name="Yoshiura K."/>
            <person name="Kantaputra P.K."/>
            <person name="Soeda E."/>
            <person name="Niikawa N."/>
        </authorList>
    </citation>
    <scope>NUCLEOTIDE SEQUENCE [GENOMIC DNA]</scope>
</reference>
<reference key="2">
    <citation type="journal article" date="2005" name="Nature">
        <title>Generation and annotation of the DNA sequences of human chromosomes 2 and 4.</title>
        <authorList>
            <person name="Hillier L.W."/>
            <person name="Graves T.A."/>
            <person name="Fulton R.S."/>
            <person name="Fulton L.A."/>
            <person name="Pepin K.H."/>
            <person name="Minx P."/>
            <person name="Wagner-McPherson C."/>
            <person name="Layman D."/>
            <person name="Wylie K."/>
            <person name="Sekhon M."/>
            <person name="Becker M.C."/>
            <person name="Fewell G.A."/>
            <person name="Delehaunty K.D."/>
            <person name="Miner T.L."/>
            <person name="Nash W.E."/>
            <person name="Kremitzki C."/>
            <person name="Oddy L."/>
            <person name="Du H."/>
            <person name="Sun H."/>
            <person name="Bradshaw-Cordum H."/>
            <person name="Ali J."/>
            <person name="Carter J."/>
            <person name="Cordes M."/>
            <person name="Harris A."/>
            <person name="Isak A."/>
            <person name="van Brunt A."/>
            <person name="Nguyen C."/>
            <person name="Du F."/>
            <person name="Courtney L."/>
            <person name="Kalicki J."/>
            <person name="Ozersky P."/>
            <person name="Abbott S."/>
            <person name="Armstrong J."/>
            <person name="Belter E.A."/>
            <person name="Caruso L."/>
            <person name="Cedroni M."/>
            <person name="Cotton M."/>
            <person name="Davidson T."/>
            <person name="Desai A."/>
            <person name="Elliott G."/>
            <person name="Erb T."/>
            <person name="Fronick C."/>
            <person name="Gaige T."/>
            <person name="Haakenson W."/>
            <person name="Haglund K."/>
            <person name="Holmes A."/>
            <person name="Harkins R."/>
            <person name="Kim K."/>
            <person name="Kruchowski S.S."/>
            <person name="Strong C.M."/>
            <person name="Grewal N."/>
            <person name="Goyea E."/>
            <person name="Hou S."/>
            <person name="Levy A."/>
            <person name="Martinka S."/>
            <person name="Mead K."/>
            <person name="McLellan M.D."/>
            <person name="Meyer R."/>
            <person name="Randall-Maher J."/>
            <person name="Tomlinson C."/>
            <person name="Dauphin-Kohlberg S."/>
            <person name="Kozlowicz-Reilly A."/>
            <person name="Shah N."/>
            <person name="Swearengen-Shahid S."/>
            <person name="Snider J."/>
            <person name="Strong J.T."/>
            <person name="Thompson J."/>
            <person name="Yoakum M."/>
            <person name="Leonard S."/>
            <person name="Pearman C."/>
            <person name="Trani L."/>
            <person name="Radionenko M."/>
            <person name="Waligorski J.E."/>
            <person name="Wang C."/>
            <person name="Rock S.M."/>
            <person name="Tin-Wollam A.-M."/>
            <person name="Maupin R."/>
            <person name="Latreille P."/>
            <person name="Wendl M.C."/>
            <person name="Yang S.-P."/>
            <person name="Pohl C."/>
            <person name="Wallis J.W."/>
            <person name="Spieth J."/>
            <person name="Bieri T.A."/>
            <person name="Berkowicz N."/>
            <person name="Nelson J.O."/>
            <person name="Osborne J."/>
            <person name="Ding L."/>
            <person name="Meyer R."/>
            <person name="Sabo A."/>
            <person name="Shotland Y."/>
            <person name="Sinha P."/>
            <person name="Wohldmann P.E."/>
            <person name="Cook L.L."/>
            <person name="Hickenbotham M.T."/>
            <person name="Eldred J."/>
            <person name="Williams D."/>
            <person name="Jones T.A."/>
            <person name="She X."/>
            <person name="Ciccarelli F.D."/>
            <person name="Izaurralde E."/>
            <person name="Taylor J."/>
            <person name="Schmutz J."/>
            <person name="Myers R.M."/>
            <person name="Cox D.R."/>
            <person name="Huang X."/>
            <person name="McPherson J.D."/>
            <person name="Mardis E.R."/>
            <person name="Clifton S.W."/>
            <person name="Warren W.C."/>
            <person name="Chinwalla A.T."/>
            <person name="Eddy S.R."/>
            <person name="Marra M.A."/>
            <person name="Ovcharenko I."/>
            <person name="Furey T.S."/>
            <person name="Miller W."/>
            <person name="Eichler E.E."/>
            <person name="Bork P."/>
            <person name="Suyama M."/>
            <person name="Torrents D."/>
            <person name="Waterston R.H."/>
            <person name="Wilson R.K."/>
        </authorList>
    </citation>
    <scope>NUCLEOTIDE SEQUENCE [LARGE SCALE GENOMIC DNA]</scope>
</reference>
<reference key="3">
    <citation type="submission" date="2005-07" db="EMBL/GenBank/DDBJ databases">
        <authorList>
            <person name="Mural R.J."/>
            <person name="Istrail S."/>
            <person name="Sutton G.G."/>
            <person name="Florea L."/>
            <person name="Halpern A.L."/>
            <person name="Mobarry C.M."/>
            <person name="Lippert R."/>
            <person name="Walenz B."/>
            <person name="Shatkay H."/>
            <person name="Dew I."/>
            <person name="Miller J.R."/>
            <person name="Flanigan M.J."/>
            <person name="Edwards N.J."/>
            <person name="Bolanos R."/>
            <person name="Fasulo D."/>
            <person name="Halldorsson B.V."/>
            <person name="Hannenhalli S."/>
            <person name="Turner R."/>
            <person name="Yooseph S."/>
            <person name="Lu F."/>
            <person name="Nusskern D.R."/>
            <person name="Shue B.C."/>
            <person name="Zheng X.H."/>
            <person name="Zhong F."/>
            <person name="Delcher A.L."/>
            <person name="Huson D.H."/>
            <person name="Kravitz S.A."/>
            <person name="Mouchard L."/>
            <person name="Reinert K."/>
            <person name="Remington K.A."/>
            <person name="Clark A.G."/>
            <person name="Waterman M.S."/>
            <person name="Eichler E.E."/>
            <person name="Adams M.D."/>
            <person name="Hunkapiller M.W."/>
            <person name="Myers E.W."/>
            <person name="Venter J.C."/>
        </authorList>
    </citation>
    <scope>NUCLEOTIDE SEQUENCE [LARGE SCALE GENOMIC DNA]</scope>
</reference>
<reference key="4">
    <citation type="journal article" date="2004" name="Genome Res.">
        <title>The status, quality, and expansion of the NIH full-length cDNA project: the Mammalian Gene Collection (MGC).</title>
        <authorList>
            <consortium name="The MGC Project Team"/>
        </authorList>
    </citation>
    <scope>NUCLEOTIDE SEQUENCE [LARGE SCALE MRNA] (ISOFORM 2)</scope>
    <scope>VARIANT GLN-186</scope>
</reference>
<reference key="5">
    <citation type="journal article" date="1991" name="Genomics">
        <title>EVX2, a human homeobox gene homologous to the even-skipped segmentation gene, is localized at the 5' end of HOX4 locus on chromosome 2.</title>
        <authorList>
            <person name="D'Esposito M."/>
            <person name="Morelli F."/>
            <person name="Acampora D."/>
            <person name="Migliaccio E."/>
            <person name="Simeone A."/>
            <person name="Boncinelli E."/>
        </authorList>
    </citation>
    <scope>NUCLEOTIDE SEQUENCE [GENOMIC DNA] OF 202-267</scope>
</reference>
<comment type="function">
    <text>Sequence-specific transcription factor which is part of a developmental regulatory system that provides cells with specific positional identities on the anterior-posterior axis.</text>
</comment>
<comment type="interaction">
    <interactant intactId="EBI-10206752">
        <id>P35452</id>
    </interactant>
    <interactant intactId="EBI-359224">
        <id>Q13077</id>
        <label>TRAF1</label>
    </interactant>
    <organismsDiffer>false</organismsDiffer>
    <experiments>3</experiments>
</comment>
<comment type="interaction">
    <interactant intactId="EBI-17244356">
        <id>P35452-2</id>
    </interactant>
    <interactant intactId="EBI-2880652">
        <id>Q08043</id>
        <label>ACTN3</label>
    </interactant>
    <organismsDiffer>false</organismsDiffer>
    <experiments>3</experiments>
</comment>
<comment type="interaction">
    <interactant intactId="EBI-17244356">
        <id>P35452-2</id>
    </interactant>
    <interactant intactId="EBI-12011224">
        <id>Q9NPB3</id>
        <label>CABP2</label>
    </interactant>
    <organismsDiffer>false</organismsDiffer>
    <experiments>3</experiments>
</comment>
<comment type="interaction">
    <interactant intactId="EBI-17244356">
        <id>P35452-2</id>
    </interactant>
    <interactant intactId="EBI-740376">
        <id>Q86UW9</id>
        <label>DTX2</label>
    </interactant>
    <organismsDiffer>false</organismsDiffer>
    <experiments>3</experiments>
</comment>
<comment type="interaction">
    <interactant intactId="EBI-17244356">
        <id>P35452-2</id>
    </interactant>
    <interactant intactId="EBI-12836320">
        <id>Q92915-2</id>
        <label>FGF14</label>
    </interactant>
    <organismsDiffer>false</organismsDiffer>
    <experiments>3</experiments>
</comment>
<comment type="interaction">
    <interactant intactId="EBI-17244356">
        <id>P35452-2</id>
    </interactant>
    <interactant intactId="EBI-725515">
        <id>O43559</id>
        <label>FRS3</label>
    </interactant>
    <organismsDiffer>false</organismsDiffer>
    <experiments>3</experiments>
</comment>
<comment type="interaction">
    <interactant intactId="EBI-17244356">
        <id>P35452-2</id>
    </interactant>
    <interactant intactId="EBI-2340269">
        <id>Q13064</id>
        <label>MKRN3</label>
    </interactant>
    <organismsDiffer>false</organismsDiffer>
    <experiments>3</experiments>
</comment>
<comment type="interaction">
    <interactant intactId="EBI-17244356">
        <id>P35452-2</id>
    </interactant>
    <interactant intactId="EBI-1055079">
        <id>O15160</id>
        <label>POLR1C</label>
    </interactant>
    <organismsDiffer>false</organismsDiffer>
    <experiments>3</experiments>
</comment>
<comment type="interaction">
    <interactant intactId="EBI-17244356">
        <id>P35452-2</id>
    </interactant>
    <interactant intactId="EBI-11952651">
        <id>Q7Z6R9</id>
        <label>TFAP2D</label>
    </interactant>
    <organismsDiffer>false</organismsDiffer>
    <experiments>3</experiments>
</comment>
<comment type="interaction">
    <interactant intactId="EBI-17244356">
        <id>P35452-2</id>
    </interactant>
    <interactant intactId="EBI-948354">
        <id>Q6DKK2</id>
        <label>TTC19</label>
    </interactant>
    <organismsDiffer>false</organismsDiffer>
    <experiments>3</experiments>
</comment>
<comment type="subcellular location">
    <subcellularLocation>
        <location>Nucleus</location>
    </subcellularLocation>
</comment>
<comment type="alternative products">
    <event type="alternative splicing"/>
    <isoform>
        <id>P35452-1</id>
        <name>1</name>
        <sequence type="displayed"/>
    </isoform>
    <isoform>
        <id>P35452-2</id>
        <name>2</name>
        <sequence type="described" ref="VSP_056816"/>
    </isoform>
</comment>
<comment type="similarity">
    <text evidence="5">Belongs to the Abd-B homeobox family.</text>
</comment>
<accession>P35452</accession>
<accession>B5MCP0</accession>
<accession>Q0VAD7</accession>
<accession>Q0VAD8</accession>
<accession>Q9NS03</accession>
<gene>
    <name type="primary">HOXD12</name>
    <name type="synonym">HOX4H</name>
</gene>
<feature type="chain" id="PRO_0000200238" description="Homeobox protein Hox-D12">
    <location>
        <begin position="1"/>
        <end position="270"/>
    </location>
</feature>
<feature type="DNA-binding region" description="Homeobox" evidence="1">
    <location>
        <begin position="202"/>
        <end position="261"/>
    </location>
</feature>
<feature type="region of interest" description="Disordered" evidence="2">
    <location>
        <begin position="102"/>
        <end position="122"/>
    </location>
</feature>
<feature type="splice variant" id="VSP_056816" description="In isoform 2." evidence="4">
    <original>LPWGAAPGRARKKRKPYTKQQIAELENEFLVNEFINRQKRKELSNRLNLSDQQVKIWFQNRRMKKKRVVLREQALALY</original>
    <variation>KRCPCSPGRFGPGWEVGFKGECKGR</variation>
    <location>
        <begin position="193"/>
        <end position="270"/>
    </location>
</feature>
<feature type="sequence variant" id="VAR_071211" description="In dbSNP:rs35817516." evidence="3">
    <original>R</original>
    <variation>Q</variation>
    <location>
        <position position="186"/>
    </location>
</feature>
<feature type="sequence conflict" description="In Ref. 1; AAF79044." evidence="5" ref="1">
    <original>GGQLAALPPISYPRG</original>
    <variation>AASLAFPLSPTRA</variation>
    <location>
        <begin position="33"/>
        <end position="47"/>
    </location>
</feature>
<feature type="sequence conflict" description="In Ref. 4; AAI21105." evidence="5" ref="4">
    <original>P</original>
    <variation>S</variation>
    <location>
        <position position="50"/>
    </location>
</feature>
<feature type="sequence conflict" description="In Ref. 1; AAF79044." evidence="5" ref="1">
    <original>QPA</original>
    <variation>TC</variation>
    <location>
        <begin position="62"/>
        <end position="64"/>
    </location>
</feature>
<feature type="sequence conflict" description="In Ref. 1; AAF79044." evidence="5" ref="1">
    <original>GPLG</original>
    <variation>ASR</variation>
    <location>
        <begin position="81"/>
        <end position="84"/>
    </location>
</feature>
<feature type="sequence conflict" description="In Ref. 1; AAF79044." evidence="5" ref="1">
    <original>LPWGAAPGR</original>
    <variation>KRCPCSPGRPAVGGGPGE</variation>
    <location>
        <begin position="193"/>
        <end position="201"/>
    </location>
</feature>